<comment type="subcellular location">
    <subcellularLocation>
        <location evidence="2">Nucleus</location>
    </subcellularLocation>
</comment>
<gene>
    <name type="ORF">SPAC10F6.08c</name>
</gene>
<proteinExistence type="evidence at protein level"/>
<name>YF98_SCHPO</name>
<evidence type="ECO:0000256" key="1">
    <source>
        <dbReference type="SAM" id="MobiDB-lite"/>
    </source>
</evidence>
<evidence type="ECO:0000269" key="2">
    <source>
    </source>
</evidence>
<evidence type="ECO:0000269" key="3">
    <source>
    </source>
</evidence>
<keyword id="KW-0238">DNA-binding</keyword>
<keyword id="KW-0539">Nucleus</keyword>
<keyword id="KW-0597">Phosphoprotein</keyword>
<keyword id="KW-1185">Reference proteome</keyword>
<reference key="1">
    <citation type="journal article" date="2002" name="Nature">
        <title>The genome sequence of Schizosaccharomyces pombe.</title>
        <authorList>
            <person name="Wood V."/>
            <person name="Gwilliam R."/>
            <person name="Rajandream M.A."/>
            <person name="Lyne M.H."/>
            <person name="Lyne R."/>
            <person name="Stewart A."/>
            <person name="Sgouros J.G."/>
            <person name="Peat N."/>
            <person name="Hayles J."/>
            <person name="Baker S.G."/>
            <person name="Basham D."/>
            <person name="Bowman S."/>
            <person name="Brooks K."/>
            <person name="Brown D."/>
            <person name="Brown S."/>
            <person name="Chillingworth T."/>
            <person name="Churcher C.M."/>
            <person name="Collins M."/>
            <person name="Connor R."/>
            <person name="Cronin A."/>
            <person name="Davis P."/>
            <person name="Feltwell T."/>
            <person name="Fraser A."/>
            <person name="Gentles S."/>
            <person name="Goble A."/>
            <person name="Hamlin N."/>
            <person name="Harris D.E."/>
            <person name="Hidalgo J."/>
            <person name="Hodgson G."/>
            <person name="Holroyd S."/>
            <person name="Hornsby T."/>
            <person name="Howarth S."/>
            <person name="Huckle E.J."/>
            <person name="Hunt S."/>
            <person name="Jagels K."/>
            <person name="James K.D."/>
            <person name="Jones L."/>
            <person name="Jones M."/>
            <person name="Leather S."/>
            <person name="McDonald S."/>
            <person name="McLean J."/>
            <person name="Mooney P."/>
            <person name="Moule S."/>
            <person name="Mungall K.L."/>
            <person name="Murphy L.D."/>
            <person name="Niblett D."/>
            <person name="Odell C."/>
            <person name="Oliver K."/>
            <person name="O'Neil S."/>
            <person name="Pearson D."/>
            <person name="Quail M.A."/>
            <person name="Rabbinowitsch E."/>
            <person name="Rutherford K.M."/>
            <person name="Rutter S."/>
            <person name="Saunders D."/>
            <person name="Seeger K."/>
            <person name="Sharp S."/>
            <person name="Skelton J."/>
            <person name="Simmonds M.N."/>
            <person name="Squares R."/>
            <person name="Squares S."/>
            <person name="Stevens K."/>
            <person name="Taylor K."/>
            <person name="Taylor R.G."/>
            <person name="Tivey A."/>
            <person name="Walsh S.V."/>
            <person name="Warren T."/>
            <person name="Whitehead S."/>
            <person name="Woodward J.R."/>
            <person name="Volckaert G."/>
            <person name="Aert R."/>
            <person name="Robben J."/>
            <person name="Grymonprez B."/>
            <person name="Weltjens I."/>
            <person name="Vanstreels E."/>
            <person name="Rieger M."/>
            <person name="Schaefer M."/>
            <person name="Mueller-Auer S."/>
            <person name="Gabel C."/>
            <person name="Fuchs M."/>
            <person name="Duesterhoeft A."/>
            <person name="Fritzc C."/>
            <person name="Holzer E."/>
            <person name="Moestl D."/>
            <person name="Hilbert H."/>
            <person name="Borzym K."/>
            <person name="Langer I."/>
            <person name="Beck A."/>
            <person name="Lehrach H."/>
            <person name="Reinhardt R."/>
            <person name="Pohl T.M."/>
            <person name="Eger P."/>
            <person name="Zimmermann W."/>
            <person name="Wedler H."/>
            <person name="Wambutt R."/>
            <person name="Purnelle B."/>
            <person name="Goffeau A."/>
            <person name="Cadieu E."/>
            <person name="Dreano S."/>
            <person name="Gloux S."/>
            <person name="Lelaure V."/>
            <person name="Mottier S."/>
            <person name="Galibert F."/>
            <person name="Aves S.J."/>
            <person name="Xiang Z."/>
            <person name="Hunt C."/>
            <person name="Moore K."/>
            <person name="Hurst S.M."/>
            <person name="Lucas M."/>
            <person name="Rochet M."/>
            <person name="Gaillardin C."/>
            <person name="Tallada V.A."/>
            <person name="Garzon A."/>
            <person name="Thode G."/>
            <person name="Daga R.R."/>
            <person name="Cruzado L."/>
            <person name="Jimenez J."/>
            <person name="Sanchez M."/>
            <person name="del Rey F."/>
            <person name="Benito J."/>
            <person name="Dominguez A."/>
            <person name="Revuelta J.L."/>
            <person name="Moreno S."/>
            <person name="Armstrong J."/>
            <person name="Forsburg S.L."/>
            <person name="Cerutti L."/>
            <person name="Lowe T."/>
            <person name="McCombie W.R."/>
            <person name="Paulsen I."/>
            <person name="Potashkin J."/>
            <person name="Shpakovski G.V."/>
            <person name="Ussery D."/>
            <person name="Barrell B.G."/>
            <person name="Nurse P."/>
        </authorList>
    </citation>
    <scope>NUCLEOTIDE SEQUENCE [LARGE SCALE GENOMIC DNA]</scope>
    <source>
        <strain>972 / ATCC 24843</strain>
    </source>
</reference>
<reference key="2">
    <citation type="journal article" date="2006" name="Nat. Biotechnol.">
        <title>ORFeome cloning and global analysis of protein localization in the fission yeast Schizosaccharomyces pombe.</title>
        <authorList>
            <person name="Matsuyama A."/>
            <person name="Arai R."/>
            <person name="Yashiroda Y."/>
            <person name="Shirai A."/>
            <person name="Kamata A."/>
            <person name="Sekido S."/>
            <person name="Kobayashi Y."/>
            <person name="Hashimoto A."/>
            <person name="Hamamoto M."/>
            <person name="Hiraoka Y."/>
            <person name="Horinouchi S."/>
            <person name="Yoshida M."/>
        </authorList>
    </citation>
    <scope>SUBCELLULAR LOCATION [LARGE SCALE ANALYSIS]</scope>
</reference>
<reference key="3">
    <citation type="journal article" date="2008" name="J. Proteome Res.">
        <title>Phosphoproteome analysis of fission yeast.</title>
        <authorList>
            <person name="Wilson-Grady J.T."/>
            <person name="Villen J."/>
            <person name="Gygi S.P."/>
        </authorList>
    </citation>
    <scope>PHOSPHORYLATION [LARGE SCALE ANALYSIS] AT THR-314; THR-315 AND SER-316</scope>
    <scope>IDENTIFICATION BY MASS SPECTROMETRY</scope>
</reference>
<dbReference type="EMBL" id="CU329670">
    <property type="protein sequence ID" value="CAA15721.1"/>
    <property type="molecule type" value="Genomic_DNA"/>
</dbReference>
<dbReference type="PIR" id="T37502">
    <property type="entry name" value="T37502"/>
</dbReference>
<dbReference type="BioGRID" id="279118">
    <property type="interactions" value="55"/>
</dbReference>
<dbReference type="STRING" id="284812.O42648"/>
<dbReference type="iPTMnet" id="O42648"/>
<dbReference type="PaxDb" id="4896-SPAC10F6.08c.1"/>
<dbReference type="EnsemblFungi" id="SPAC10F6.08c.1">
    <property type="protein sequence ID" value="SPAC10F6.08c.1:pep"/>
    <property type="gene ID" value="SPAC10F6.08c"/>
</dbReference>
<dbReference type="KEGG" id="spo:2542665"/>
<dbReference type="PomBase" id="SPAC10F6.08c"/>
<dbReference type="VEuPathDB" id="FungiDB:SPAC10F6.08c"/>
<dbReference type="eggNOG" id="KOG0381">
    <property type="taxonomic scope" value="Eukaryota"/>
</dbReference>
<dbReference type="HOGENOM" id="CLU_888911_0_0_1"/>
<dbReference type="InParanoid" id="O42648"/>
<dbReference type="PRO" id="PR:O42648"/>
<dbReference type="Proteomes" id="UP000002485">
    <property type="component" value="Chromosome I"/>
</dbReference>
<dbReference type="GO" id="GO:0031011">
    <property type="term" value="C:Ino80 complex"/>
    <property type="evidence" value="ECO:0000353"/>
    <property type="project" value="PomBase"/>
</dbReference>
<dbReference type="GO" id="GO:0005634">
    <property type="term" value="C:nucleus"/>
    <property type="evidence" value="ECO:0007005"/>
    <property type="project" value="PomBase"/>
</dbReference>
<dbReference type="GO" id="GO:0045027">
    <property type="term" value="F:DNA end binding"/>
    <property type="evidence" value="ECO:0000266"/>
    <property type="project" value="PomBase"/>
</dbReference>
<dbReference type="GO" id="GO:0006338">
    <property type="term" value="P:chromatin remodeling"/>
    <property type="evidence" value="ECO:0000314"/>
    <property type="project" value="PomBase"/>
</dbReference>
<dbReference type="GO" id="GO:0006281">
    <property type="term" value="P:DNA repair"/>
    <property type="evidence" value="ECO:0000266"/>
    <property type="project" value="PomBase"/>
</dbReference>
<dbReference type="GO" id="GO:0045815">
    <property type="term" value="P:transcription initiation-coupled chromatin remodeling"/>
    <property type="evidence" value="ECO:0000305"/>
    <property type="project" value="PomBase"/>
</dbReference>
<dbReference type="CDD" id="cd00084">
    <property type="entry name" value="HMG-box_SF"/>
    <property type="match status" value="1"/>
</dbReference>
<dbReference type="Gene3D" id="1.10.30.10">
    <property type="entry name" value="High mobility group box domain"/>
    <property type="match status" value="1"/>
</dbReference>
<dbReference type="InterPro" id="IPR009071">
    <property type="entry name" value="HMG_box_dom"/>
</dbReference>
<dbReference type="InterPro" id="IPR036910">
    <property type="entry name" value="HMG_box_dom_sf"/>
</dbReference>
<dbReference type="InterPro" id="IPR056513">
    <property type="entry name" value="INO80F"/>
</dbReference>
<dbReference type="Pfam" id="PF00505">
    <property type="entry name" value="HMG_box"/>
    <property type="match status" value="1"/>
</dbReference>
<dbReference type="Pfam" id="PF24245">
    <property type="entry name" value="INO80F"/>
    <property type="match status" value="1"/>
</dbReference>
<dbReference type="SMART" id="SM00398">
    <property type="entry name" value="HMG"/>
    <property type="match status" value="1"/>
</dbReference>
<dbReference type="SUPFAM" id="SSF47095">
    <property type="entry name" value="HMG-box"/>
    <property type="match status" value="1"/>
</dbReference>
<organism>
    <name type="scientific">Schizosaccharomyces pombe (strain 972 / ATCC 24843)</name>
    <name type="common">Fission yeast</name>
    <dbReference type="NCBI Taxonomy" id="284812"/>
    <lineage>
        <taxon>Eukaryota</taxon>
        <taxon>Fungi</taxon>
        <taxon>Dikarya</taxon>
        <taxon>Ascomycota</taxon>
        <taxon>Taphrinomycotina</taxon>
        <taxon>Schizosaccharomycetes</taxon>
        <taxon>Schizosaccharomycetales</taxon>
        <taxon>Schizosaccharomycetaceae</taxon>
        <taxon>Schizosaccharomyces</taxon>
    </lineage>
</organism>
<sequence>MENPPYHVSISKSEEIKYRQKCKDLKARIQEIQKGNQELLSKYEVIRRAVKRGRLERAILMEQLELQSEAKSREFGQRSEPSPPPPPEGIKIKISTKGAGNPSAKKLKISTEETSDTNVALNNTSEISHKSSNNSQPKDASVNDTDADFEQQNQVVQSKDEKITNTDPIPSPIITNLKTESSKSSGAKKATSNAKITDTMLFNHFSSIQKPKLKAEGSTLKGQALKKTLEDTWNNLTEEEKKPYHEGLLAAREKAREARRRRSAQNSAKLEKEKAKEKQKDKDQEQDTVSDKNQIDEIEKGQKEVDEEPVSEPTTSPILPPKNQEPIRMGGFTVVNRSSNA</sequence>
<accession>O42648</accession>
<protein>
    <recommendedName>
        <fullName>HMG box-containing protein C10F6.08c</fullName>
    </recommendedName>
</protein>
<feature type="chain" id="PRO_0000339416" description="HMG box-containing protein C10F6.08c">
    <location>
        <begin position="1"/>
        <end position="341"/>
    </location>
</feature>
<feature type="DNA-binding region" description="HMG box">
    <location>
        <begin position="195"/>
        <end position="263"/>
    </location>
</feature>
<feature type="region of interest" description="Disordered" evidence="1">
    <location>
        <begin position="68"/>
        <end position="195"/>
    </location>
</feature>
<feature type="region of interest" description="Disordered" evidence="1">
    <location>
        <begin position="236"/>
        <end position="341"/>
    </location>
</feature>
<feature type="compositionally biased region" description="Basic and acidic residues" evidence="1">
    <location>
        <begin position="68"/>
        <end position="77"/>
    </location>
</feature>
<feature type="compositionally biased region" description="Polar residues" evidence="1">
    <location>
        <begin position="116"/>
        <end position="157"/>
    </location>
</feature>
<feature type="compositionally biased region" description="Polar residues" evidence="1">
    <location>
        <begin position="165"/>
        <end position="177"/>
    </location>
</feature>
<feature type="compositionally biased region" description="Low complexity" evidence="1">
    <location>
        <begin position="178"/>
        <end position="195"/>
    </location>
</feature>
<feature type="compositionally biased region" description="Basic and acidic residues" evidence="1">
    <location>
        <begin position="238"/>
        <end position="256"/>
    </location>
</feature>
<feature type="compositionally biased region" description="Basic and acidic residues" evidence="1">
    <location>
        <begin position="269"/>
        <end position="304"/>
    </location>
</feature>
<feature type="modified residue" description="Phosphothreonine" evidence="3">
    <location>
        <position position="314"/>
    </location>
</feature>
<feature type="modified residue" description="Phosphothreonine" evidence="3">
    <location>
        <position position="315"/>
    </location>
</feature>
<feature type="modified residue" description="Phosphoserine" evidence="3">
    <location>
        <position position="316"/>
    </location>
</feature>